<organism>
    <name type="scientific">Zea mays</name>
    <name type="common">Maize</name>
    <dbReference type="NCBI Taxonomy" id="4577"/>
    <lineage>
        <taxon>Eukaryota</taxon>
        <taxon>Viridiplantae</taxon>
        <taxon>Streptophyta</taxon>
        <taxon>Embryophyta</taxon>
        <taxon>Tracheophyta</taxon>
        <taxon>Spermatophyta</taxon>
        <taxon>Magnoliopsida</taxon>
        <taxon>Liliopsida</taxon>
        <taxon>Poales</taxon>
        <taxon>Poaceae</taxon>
        <taxon>PACMAD clade</taxon>
        <taxon>Panicoideae</taxon>
        <taxon>Andropogonodae</taxon>
        <taxon>Andropogoneae</taxon>
        <taxon>Tripsacinae</taxon>
        <taxon>Zea</taxon>
    </lineage>
</organism>
<name>PSAA_MAIZE</name>
<gene>
    <name evidence="1" type="primary">psaA</name>
    <name type="synonym">ps1a1</name>
</gene>
<comment type="function">
    <text>PsaA and PsaB bind P700, the primary electron donor of photosystem I (PSI), as well as the electron acceptors A0, A1 and FX. PSI is a plastocyanin-ferredoxin oxidoreductase, converting photonic excitation into a charge separation, which transfers an electron from the donor P700 chlorophyll pair to the spectroscopically characterized acceptors A0, A1, FX, FA and FB in turn. Oxidized P700 is reduced on the lumenal side of the thylakoid membrane by plastocyanin.</text>
</comment>
<comment type="catalytic activity">
    <reaction evidence="1">
        <text>reduced [plastocyanin] + hnu + oxidized [2Fe-2S]-[ferredoxin] = oxidized [plastocyanin] + reduced [2Fe-2S]-[ferredoxin]</text>
        <dbReference type="Rhea" id="RHEA:30407"/>
        <dbReference type="Rhea" id="RHEA-COMP:10000"/>
        <dbReference type="Rhea" id="RHEA-COMP:10001"/>
        <dbReference type="Rhea" id="RHEA-COMP:10039"/>
        <dbReference type="Rhea" id="RHEA-COMP:10040"/>
        <dbReference type="ChEBI" id="CHEBI:29036"/>
        <dbReference type="ChEBI" id="CHEBI:30212"/>
        <dbReference type="ChEBI" id="CHEBI:33737"/>
        <dbReference type="ChEBI" id="CHEBI:33738"/>
        <dbReference type="ChEBI" id="CHEBI:49552"/>
        <dbReference type="EC" id="1.97.1.12"/>
    </reaction>
</comment>
<comment type="cofactor">
    <text evidence="1">P700 is a chlorophyll a/chlorophyll a' dimer, A0 is one or more chlorophyll a, A1 is one or both phylloquinones and FX is a shared 4Fe-4S iron-sulfur center.</text>
</comment>
<comment type="subunit">
    <text evidence="1">The PsaA/B heterodimer binds the P700 chlorophyll special pair and subsequent electron acceptors. PSI consists of a core antenna complex that captures photons, and an electron transfer chain that converts photonic excitation into a charge separation. The eukaryotic PSI reaction center is composed of at least 11 subunits.</text>
</comment>
<comment type="subcellular location">
    <subcellularLocation>
        <location evidence="1">Plastid</location>
        <location evidence="1">Chloroplast thylakoid membrane</location>
        <topology evidence="1">Multi-pass membrane protein</topology>
    </subcellularLocation>
</comment>
<comment type="similarity">
    <text evidence="1">Belongs to the PsaA/PsaB family.</text>
</comment>
<sequence>MIIRSSEPEVKIAVDRDPIKTSFEEWARPGHFSRTIAKGNPDTTTWIWNLHADAHDFDSHTGDLEEISRKVFSAHFGQLSIIFLWLSGMYFHGARFSNYEAWLSDPTHIGPSAQVVWPIVGQEILNGDVGGGFRGIQITSGFFQIWRASGITSELQLYCTAIGALIFASLMLFAGWFHYHKAAPKLAWFQDVESMLNHHLAGLLGLGSLSWAGHQIHVSLPINQFLDAGVDPKEIPLPHEFILNRDLLAQLYPSFAEGATPFFTLNWSKYAEFLSFRGGLDPITGGLWLSDIAHHHLAIAILFLIAGHMYRTNWGIGHGLKDILEAHKGPFTGQGHKGLYEILTTSWHAQLSLNLAMLGSTTIVVAHHMYSMPPYPYLATDYGTQLSLFTHHMWIGGFLIVGAAAHAAIFMVRDYDPTTRYNDLLDRVLRHRDAIISHLNWVCIFLGFHSFGLYIHNDTMSALGRPQDMFSDAAIQLQPIFAQWIQNIHAGAPGVTAPGATTSTSLTWGGGELVAIGGKVALLPIPLGTADFLVHHIHAFTIHVTVLILLKGVLFARSSRLIPDKANLGFRFPCDGPGRGGTCQVSAWDHVFLGLFWMYNSISVVIFHFSWKMQSDVWGTISDQGIVTHITGGNFAQSSITINGWLRDFLWAQASQVIQSYGSSLSAYGLFFLGAHFVWAFSLMFLFSGRGYWQELIESIVWAHNKLKVAPATQPRALSIIQGRAVGVTHYLLGGIATTWAFFLARIIAVG</sequence>
<accession>P04966</accession>
<geneLocation type="chloroplast"/>
<feature type="chain" id="PRO_0000088557" description="Photosystem I P700 chlorophyll a apoprotein A1">
    <location>
        <begin position="1"/>
        <end position="751"/>
    </location>
</feature>
<feature type="transmembrane region" description="Helical; Name=I" evidence="1">
    <location>
        <begin position="71"/>
        <end position="94"/>
    </location>
</feature>
<feature type="transmembrane region" description="Helical; Name=II" evidence="1">
    <location>
        <begin position="157"/>
        <end position="180"/>
    </location>
</feature>
<feature type="transmembrane region" description="Helical; Name=III" evidence="1">
    <location>
        <begin position="196"/>
        <end position="220"/>
    </location>
</feature>
<feature type="transmembrane region" description="Helical; Name=IV" evidence="1">
    <location>
        <begin position="292"/>
        <end position="310"/>
    </location>
</feature>
<feature type="transmembrane region" description="Helical; Name=V" evidence="1">
    <location>
        <begin position="347"/>
        <end position="370"/>
    </location>
</feature>
<feature type="transmembrane region" description="Helical; Name=VI" evidence="1">
    <location>
        <begin position="386"/>
        <end position="412"/>
    </location>
</feature>
<feature type="transmembrane region" description="Helical; Name=VII" evidence="1">
    <location>
        <begin position="434"/>
        <end position="456"/>
    </location>
</feature>
<feature type="transmembrane region" description="Helical; Name=VIII" evidence="1">
    <location>
        <begin position="532"/>
        <end position="550"/>
    </location>
</feature>
<feature type="transmembrane region" description="Helical; Name=IX" evidence="1">
    <location>
        <begin position="590"/>
        <end position="611"/>
    </location>
</feature>
<feature type="transmembrane region" description="Helical; Name=X" evidence="1">
    <location>
        <begin position="665"/>
        <end position="687"/>
    </location>
</feature>
<feature type="transmembrane region" description="Helical; Name=XI" evidence="1">
    <location>
        <begin position="725"/>
        <end position="745"/>
    </location>
</feature>
<feature type="binding site" evidence="1">
    <location>
        <position position="574"/>
    </location>
    <ligand>
        <name>[4Fe-4S] cluster</name>
        <dbReference type="ChEBI" id="CHEBI:49883"/>
        <note>ligand shared between dimeric partners</note>
    </ligand>
</feature>
<feature type="binding site" evidence="1">
    <location>
        <position position="583"/>
    </location>
    <ligand>
        <name>[4Fe-4S] cluster</name>
        <dbReference type="ChEBI" id="CHEBI:49883"/>
        <note>ligand shared between dimeric partners</note>
    </ligand>
</feature>
<feature type="binding site" description="axial binding residue" evidence="1">
    <location>
        <position position="676"/>
    </location>
    <ligand>
        <name>chlorophyll a'</name>
        <dbReference type="ChEBI" id="CHEBI:189419"/>
        <label>A1</label>
    </ligand>
    <ligandPart>
        <name>Mg</name>
        <dbReference type="ChEBI" id="CHEBI:25107"/>
    </ligandPart>
</feature>
<feature type="binding site" description="axial binding residue" evidence="1">
    <location>
        <position position="684"/>
    </location>
    <ligand>
        <name>chlorophyll a</name>
        <dbReference type="ChEBI" id="CHEBI:58416"/>
        <label>A3</label>
    </ligand>
    <ligandPart>
        <name>Mg</name>
        <dbReference type="ChEBI" id="CHEBI:25107"/>
    </ligandPart>
</feature>
<feature type="binding site" evidence="1">
    <location>
        <position position="692"/>
    </location>
    <ligand>
        <name>chlorophyll a</name>
        <dbReference type="ChEBI" id="CHEBI:58416"/>
        <label>A3</label>
    </ligand>
</feature>
<feature type="binding site" evidence="1">
    <location>
        <position position="693"/>
    </location>
    <ligand>
        <name>phylloquinone</name>
        <dbReference type="ChEBI" id="CHEBI:18067"/>
        <label>A</label>
    </ligand>
</feature>
<feature type="turn" evidence="2">
    <location>
        <begin position="24"/>
        <end position="26"/>
    </location>
</feature>
<feature type="turn" evidence="2">
    <location>
        <begin position="29"/>
        <end position="32"/>
    </location>
</feature>
<feature type="turn" evidence="2">
    <location>
        <begin position="34"/>
        <end position="38"/>
    </location>
</feature>
<feature type="helix" evidence="2">
    <location>
        <begin position="45"/>
        <end position="52"/>
    </location>
</feature>
<feature type="strand" evidence="2">
    <location>
        <begin position="53"/>
        <end position="55"/>
    </location>
</feature>
<feature type="turn" evidence="2">
    <location>
        <begin position="58"/>
        <end position="60"/>
    </location>
</feature>
<feature type="helix" evidence="2">
    <location>
        <begin position="64"/>
        <end position="95"/>
    </location>
</feature>
<feature type="helix" evidence="2">
    <location>
        <begin position="99"/>
        <end position="104"/>
    </location>
</feature>
<feature type="strand" evidence="2">
    <location>
        <begin position="112"/>
        <end position="114"/>
    </location>
</feature>
<feature type="strand" evidence="2">
    <location>
        <begin position="119"/>
        <end position="121"/>
    </location>
</feature>
<feature type="helix" evidence="2">
    <location>
        <begin position="122"/>
        <end position="125"/>
    </location>
</feature>
<feature type="strand" evidence="2">
    <location>
        <begin position="126"/>
        <end position="128"/>
    </location>
</feature>
<feature type="strand" evidence="2">
    <location>
        <begin position="130"/>
        <end position="132"/>
    </location>
</feature>
<feature type="strand" evidence="2">
    <location>
        <begin position="134"/>
        <end position="137"/>
    </location>
</feature>
<feature type="helix" evidence="2">
    <location>
        <begin position="142"/>
        <end position="148"/>
    </location>
</feature>
<feature type="helix" evidence="2">
    <location>
        <begin position="154"/>
        <end position="177"/>
    </location>
</feature>
<feature type="turn" evidence="2">
    <location>
        <begin position="178"/>
        <end position="181"/>
    </location>
</feature>
<feature type="helix" evidence="2">
    <location>
        <begin position="186"/>
        <end position="190"/>
    </location>
</feature>
<feature type="helix" evidence="2">
    <location>
        <begin position="192"/>
        <end position="201"/>
    </location>
</feature>
<feature type="helix" evidence="2">
    <location>
        <begin position="204"/>
        <end position="217"/>
    </location>
</feature>
<feature type="helix" evidence="2">
    <location>
        <begin position="219"/>
        <end position="228"/>
    </location>
</feature>
<feature type="helix" evidence="2">
    <location>
        <begin position="232"/>
        <end position="234"/>
    </location>
</feature>
<feature type="helix" evidence="2">
    <location>
        <begin position="238"/>
        <end position="242"/>
    </location>
</feature>
<feature type="helix" evidence="2">
    <location>
        <begin position="245"/>
        <end position="251"/>
    </location>
</feature>
<feature type="helix" evidence="2">
    <location>
        <begin position="253"/>
        <end position="256"/>
    </location>
</feature>
<feature type="turn" evidence="2">
    <location>
        <begin position="257"/>
        <end position="259"/>
    </location>
</feature>
<feature type="helix" evidence="2">
    <location>
        <begin position="260"/>
        <end position="263"/>
    </location>
</feature>
<feature type="helix" evidence="2">
    <location>
        <begin position="267"/>
        <end position="272"/>
    </location>
</feature>
<feature type="turn" evidence="2">
    <location>
        <begin position="282"/>
        <end position="284"/>
    </location>
</feature>
<feature type="helix" evidence="2">
    <location>
        <begin position="289"/>
        <end position="306"/>
    </location>
</feature>
<feature type="strand" evidence="2">
    <location>
        <begin position="312"/>
        <end position="315"/>
    </location>
</feature>
<feature type="helix" evidence="2">
    <location>
        <begin position="320"/>
        <end position="326"/>
    </location>
</feature>
<feature type="turn" evidence="2">
    <location>
        <begin position="330"/>
        <end position="338"/>
    </location>
</feature>
<feature type="helix" evidence="2">
    <location>
        <begin position="339"/>
        <end position="342"/>
    </location>
</feature>
<feature type="helix" evidence="2">
    <location>
        <begin position="347"/>
        <end position="370"/>
    </location>
</feature>
<feature type="helix" evidence="2">
    <location>
        <begin position="382"/>
        <end position="412"/>
    </location>
</feature>
<feature type="turn" evidence="2">
    <location>
        <begin position="417"/>
        <end position="419"/>
    </location>
</feature>
<feature type="helix" evidence="2">
    <location>
        <begin position="424"/>
        <end position="430"/>
    </location>
</feature>
<feature type="helix" evidence="2">
    <location>
        <begin position="432"/>
        <end position="462"/>
    </location>
</feature>
<feature type="helix" evidence="2">
    <location>
        <begin position="466"/>
        <end position="468"/>
    </location>
</feature>
<feature type="strand" evidence="2">
    <location>
        <begin position="469"/>
        <end position="471"/>
    </location>
</feature>
<feature type="helix" evidence="2">
    <location>
        <begin position="480"/>
        <end position="490"/>
    </location>
</feature>
<feature type="turn" evidence="2">
    <location>
        <begin position="492"/>
        <end position="496"/>
    </location>
</feature>
<feature type="strand" evidence="2">
    <location>
        <begin position="508"/>
        <end position="510"/>
    </location>
</feature>
<feature type="strand" evidence="2">
    <location>
        <begin position="514"/>
        <end position="516"/>
    </location>
</feature>
<feature type="strand" evidence="2">
    <location>
        <begin position="519"/>
        <end position="522"/>
    </location>
</feature>
<feature type="helix" evidence="2">
    <location>
        <begin position="529"/>
        <end position="554"/>
    </location>
</feature>
<feature type="helix" evidence="2">
    <location>
        <begin position="565"/>
        <end position="567"/>
    </location>
</feature>
<feature type="helix" evidence="2">
    <location>
        <begin position="587"/>
        <end position="616"/>
    </location>
</feature>
<feature type="strand" evidence="2">
    <location>
        <begin position="619"/>
        <end position="621"/>
    </location>
</feature>
<feature type="strand" evidence="2">
    <location>
        <begin position="623"/>
        <end position="625"/>
    </location>
</feature>
<feature type="helix" evidence="2">
    <location>
        <begin position="635"/>
        <end position="638"/>
    </location>
</feature>
<feature type="helix" evidence="2">
    <location>
        <begin position="642"/>
        <end position="647"/>
    </location>
</feature>
<feature type="turn" evidence="2">
    <location>
        <begin position="648"/>
        <end position="654"/>
    </location>
</feature>
<feature type="helix" evidence="2">
    <location>
        <begin position="655"/>
        <end position="658"/>
    </location>
</feature>
<feature type="helix" evidence="2">
    <location>
        <begin position="666"/>
        <end position="681"/>
    </location>
</feature>
<feature type="helix" evidence="2">
    <location>
        <begin position="683"/>
        <end position="687"/>
    </location>
</feature>
<feature type="helix" evidence="2">
    <location>
        <begin position="690"/>
        <end position="705"/>
    </location>
</feature>
<feature type="turn" evidence="2">
    <location>
        <begin position="706"/>
        <end position="708"/>
    </location>
</feature>
<feature type="strand" evidence="2">
    <location>
        <begin position="712"/>
        <end position="714"/>
    </location>
</feature>
<feature type="helix" evidence="2">
    <location>
        <begin position="720"/>
        <end position="749"/>
    </location>
</feature>
<evidence type="ECO:0000255" key="1">
    <source>
        <dbReference type="HAMAP-Rule" id="MF_00458"/>
    </source>
</evidence>
<evidence type="ECO:0007829" key="2">
    <source>
        <dbReference type="PDB" id="5ZJI"/>
    </source>
</evidence>
<reference key="1">
    <citation type="journal article" date="1985" name="J. Biol. Chem.">
        <title>Two partially homologous adjacent light-inducible maize chloroplast genes encoding polypeptides of the P700 chlorophyll a-protein complex of photosystem I.</title>
        <authorList>
            <person name="Fish L.E."/>
            <person name="Kuck U."/>
            <person name="Bogorad L."/>
        </authorList>
    </citation>
    <scope>NUCLEOTIDE SEQUENCE [LARGE SCALE GENOMIC DNA]</scope>
    <source>
        <strain>cv. B73</strain>
    </source>
</reference>
<reference key="2">
    <citation type="journal article" date="1995" name="J. Mol. Biol.">
        <title>Complete sequence of the maize chloroplast genome: gene content, hotspots of divergence and fine tuning of genetic information by transcript editing.</title>
        <authorList>
            <person name="Maier R.M."/>
            <person name="Neckermann K."/>
            <person name="Igloi G.L."/>
            <person name="Koessel H."/>
        </authorList>
    </citation>
    <scope>NUCLEOTIDE SEQUENCE [LARGE SCALE GENOMIC DNA]</scope>
    <source>
        <strain>cv. B73</strain>
    </source>
</reference>
<reference key="3">
    <citation type="journal article" date="1991" name="Plant Mol. Biol.">
        <title>Nucleotide sequence and transcription of maize plastid genome Bam HI fragment 14 containing ORF170.</title>
        <authorList>
            <person name="Kangasjarvi J."/>
            <person name="McCullough A."/>
            <person name="Gengenbach B.G."/>
        </authorList>
    </citation>
    <scope>NUCLEOTIDE SEQUENCE [LARGE SCALE GENOMIC DNA] OF 1-17</scope>
    <source>
        <strain>cv. B73</strain>
        <tissue>Seedling leaf</tissue>
    </source>
</reference>
<proteinExistence type="evidence at protein level"/>
<keyword id="KW-0002">3D-structure</keyword>
<keyword id="KW-0004">4Fe-4S</keyword>
<keyword id="KW-0148">Chlorophyll</keyword>
<keyword id="KW-0150">Chloroplast</keyword>
<keyword id="KW-0157">Chromophore</keyword>
<keyword id="KW-0249">Electron transport</keyword>
<keyword id="KW-0408">Iron</keyword>
<keyword id="KW-0411">Iron-sulfur</keyword>
<keyword id="KW-0460">Magnesium</keyword>
<keyword id="KW-0472">Membrane</keyword>
<keyword id="KW-0479">Metal-binding</keyword>
<keyword id="KW-0560">Oxidoreductase</keyword>
<keyword id="KW-0602">Photosynthesis</keyword>
<keyword id="KW-0603">Photosystem I</keyword>
<keyword id="KW-0934">Plastid</keyword>
<keyword id="KW-1185">Reference proteome</keyword>
<keyword id="KW-0793">Thylakoid</keyword>
<keyword id="KW-0812">Transmembrane</keyword>
<keyword id="KW-1133">Transmembrane helix</keyword>
<keyword id="KW-0813">Transport</keyword>
<dbReference type="EC" id="1.97.1.12" evidence="1"/>
<dbReference type="EMBL" id="M11203">
    <property type="protein sequence ID" value="AAA84485.1"/>
    <property type="molecule type" value="Genomic_DNA"/>
</dbReference>
<dbReference type="EMBL" id="X86563">
    <property type="protein sequence ID" value="CAA60286.2"/>
    <property type="molecule type" value="Genomic_DNA"/>
</dbReference>
<dbReference type="EMBL" id="X58080">
    <property type="protein sequence ID" value="CAA41109.1"/>
    <property type="molecule type" value="Genomic_DNA"/>
</dbReference>
<dbReference type="PIR" id="S14661">
    <property type="entry name" value="S14661"/>
</dbReference>
<dbReference type="PIR" id="S58552">
    <property type="entry name" value="S58552"/>
</dbReference>
<dbReference type="RefSeq" id="NP_043025.2">
    <property type="nucleotide sequence ID" value="NC_001666.2"/>
</dbReference>
<dbReference type="PDB" id="5ZJI">
    <property type="method" value="EM"/>
    <property type="resolution" value="3.30 A"/>
    <property type="chains" value="A=1-751"/>
</dbReference>
<dbReference type="PDBsum" id="5ZJI"/>
<dbReference type="EMDB" id="EMD-6932"/>
<dbReference type="SMR" id="P04966"/>
<dbReference type="FunCoup" id="P04966">
    <property type="interactions" value="545"/>
</dbReference>
<dbReference type="IntAct" id="P04966">
    <property type="interactions" value="1"/>
</dbReference>
<dbReference type="STRING" id="4577.P04966"/>
<dbReference type="GeneID" id="845195"/>
<dbReference type="KEGG" id="zma:845195"/>
<dbReference type="MaizeGDB" id="57301"/>
<dbReference type="InParanoid" id="P04966"/>
<dbReference type="OrthoDB" id="1871948at2759"/>
<dbReference type="Proteomes" id="UP000007305">
    <property type="component" value="Chloroplast"/>
</dbReference>
<dbReference type="ExpressionAtlas" id="P04966">
    <property type="expression patterns" value="baseline"/>
</dbReference>
<dbReference type="GO" id="GO:0009535">
    <property type="term" value="C:chloroplast thylakoid membrane"/>
    <property type="evidence" value="ECO:0007669"/>
    <property type="project" value="UniProtKB-SubCell"/>
</dbReference>
<dbReference type="GO" id="GO:0009522">
    <property type="term" value="C:photosystem I"/>
    <property type="evidence" value="ECO:0007669"/>
    <property type="project" value="UniProtKB-KW"/>
</dbReference>
<dbReference type="GO" id="GO:0051539">
    <property type="term" value="F:4 iron, 4 sulfur cluster binding"/>
    <property type="evidence" value="ECO:0007669"/>
    <property type="project" value="UniProtKB-KW"/>
</dbReference>
<dbReference type="GO" id="GO:0016168">
    <property type="term" value="F:chlorophyll binding"/>
    <property type="evidence" value="ECO:0007669"/>
    <property type="project" value="UniProtKB-KW"/>
</dbReference>
<dbReference type="GO" id="GO:0009055">
    <property type="term" value="F:electron transfer activity"/>
    <property type="evidence" value="ECO:0007669"/>
    <property type="project" value="UniProtKB-UniRule"/>
</dbReference>
<dbReference type="GO" id="GO:0000287">
    <property type="term" value="F:magnesium ion binding"/>
    <property type="evidence" value="ECO:0007669"/>
    <property type="project" value="UniProtKB-UniRule"/>
</dbReference>
<dbReference type="GO" id="GO:0016491">
    <property type="term" value="F:oxidoreductase activity"/>
    <property type="evidence" value="ECO:0007669"/>
    <property type="project" value="UniProtKB-KW"/>
</dbReference>
<dbReference type="GO" id="GO:0015979">
    <property type="term" value="P:photosynthesis"/>
    <property type="evidence" value="ECO:0007669"/>
    <property type="project" value="UniProtKB-UniRule"/>
</dbReference>
<dbReference type="FunFam" id="1.20.1130.10:FF:000001">
    <property type="entry name" value="Photosystem I P700 chlorophyll a apoprotein A2"/>
    <property type="match status" value="1"/>
</dbReference>
<dbReference type="Gene3D" id="1.20.1130.10">
    <property type="entry name" value="Photosystem I PsaA/PsaB"/>
    <property type="match status" value="1"/>
</dbReference>
<dbReference type="HAMAP" id="MF_00458">
    <property type="entry name" value="PSI_PsaA"/>
    <property type="match status" value="1"/>
</dbReference>
<dbReference type="InterPro" id="IPR006243">
    <property type="entry name" value="PSI_PsaA"/>
</dbReference>
<dbReference type="InterPro" id="IPR001280">
    <property type="entry name" value="PSI_PsaA/B"/>
</dbReference>
<dbReference type="InterPro" id="IPR020586">
    <property type="entry name" value="PSI_PsaA/B_CS"/>
</dbReference>
<dbReference type="InterPro" id="IPR036408">
    <property type="entry name" value="PSI_PsaA/B_sf"/>
</dbReference>
<dbReference type="NCBIfam" id="TIGR01335">
    <property type="entry name" value="psaA"/>
    <property type="match status" value="1"/>
</dbReference>
<dbReference type="PANTHER" id="PTHR30128">
    <property type="entry name" value="OUTER MEMBRANE PROTEIN, OMPA-RELATED"/>
    <property type="match status" value="1"/>
</dbReference>
<dbReference type="PANTHER" id="PTHR30128:SF19">
    <property type="entry name" value="PHOTOSYSTEM I P700 CHLOROPHYLL A APOPROTEIN A1-RELATED"/>
    <property type="match status" value="1"/>
</dbReference>
<dbReference type="Pfam" id="PF00223">
    <property type="entry name" value="PsaA_PsaB"/>
    <property type="match status" value="1"/>
</dbReference>
<dbReference type="PIRSF" id="PIRSF002905">
    <property type="entry name" value="PSI_A"/>
    <property type="match status" value="1"/>
</dbReference>
<dbReference type="PRINTS" id="PR00257">
    <property type="entry name" value="PHOTSYSPSAAB"/>
</dbReference>
<dbReference type="SUPFAM" id="SSF81558">
    <property type="entry name" value="Photosystem I subunits PsaA/PsaB"/>
    <property type="match status" value="1"/>
</dbReference>
<dbReference type="PROSITE" id="PS00419">
    <property type="entry name" value="PHOTOSYSTEM_I_PSAAB"/>
    <property type="match status" value="1"/>
</dbReference>
<protein>
    <recommendedName>
        <fullName evidence="1">Photosystem I P700 chlorophyll a apoprotein A1</fullName>
        <ecNumber evidence="1">1.97.1.12</ecNumber>
    </recommendedName>
    <alternativeName>
        <fullName evidence="1">PSI-A</fullName>
    </alternativeName>
    <alternativeName>
        <fullName evidence="1">PsaA</fullName>
    </alternativeName>
</protein>